<reference key="1">
    <citation type="journal article" date="2001" name="Lancet">
        <title>Whole genome sequencing of meticillin-resistant Staphylococcus aureus.</title>
        <authorList>
            <person name="Kuroda M."/>
            <person name="Ohta T."/>
            <person name="Uchiyama I."/>
            <person name="Baba T."/>
            <person name="Yuzawa H."/>
            <person name="Kobayashi I."/>
            <person name="Cui L."/>
            <person name="Oguchi A."/>
            <person name="Aoki K."/>
            <person name="Nagai Y."/>
            <person name="Lian J.-Q."/>
            <person name="Ito T."/>
            <person name="Kanamori M."/>
            <person name="Matsumaru H."/>
            <person name="Maruyama A."/>
            <person name="Murakami H."/>
            <person name="Hosoyama A."/>
            <person name="Mizutani-Ui Y."/>
            <person name="Takahashi N.K."/>
            <person name="Sawano T."/>
            <person name="Inoue R."/>
            <person name="Kaito C."/>
            <person name="Sekimizu K."/>
            <person name="Hirakawa H."/>
            <person name="Kuhara S."/>
            <person name="Goto S."/>
            <person name="Yabuzaki J."/>
            <person name="Kanehisa M."/>
            <person name="Yamashita A."/>
            <person name="Oshima K."/>
            <person name="Furuya K."/>
            <person name="Yoshino C."/>
            <person name="Shiba T."/>
            <person name="Hattori M."/>
            <person name="Ogasawara N."/>
            <person name="Hayashi H."/>
            <person name="Hiramatsu K."/>
        </authorList>
    </citation>
    <scope>NUCLEOTIDE SEQUENCE [LARGE SCALE GENOMIC DNA]</scope>
    <source>
        <strain>N315</strain>
    </source>
</reference>
<reference key="2">
    <citation type="journal article" date="2003" name="Mol. Microbiol.">
        <title>Two-component system VraSR positively modulates the regulation of cell-wall biosynthesis pathway in Staphylococcus aureus.</title>
        <authorList>
            <person name="Kuroda M."/>
            <person name="Kuroda H."/>
            <person name="Oshima T."/>
            <person name="Takeuchi F."/>
            <person name="Mori H."/>
            <person name="Hiramatsu K."/>
        </authorList>
    </citation>
    <scope>FUNCTION</scope>
    <scope>REGULATION BY ANTIBIOTICS</scope>
</reference>
<reference key="3">
    <citation type="submission" date="2007-10" db="UniProtKB">
        <title>Shotgun proteomic analysis of total and membrane protein extracts of S. aureus strain N315.</title>
        <authorList>
            <person name="Vaezzadeh A.R."/>
            <person name="Deshusses J."/>
            <person name="Lescuyer P."/>
            <person name="Hochstrasser D.F."/>
        </authorList>
    </citation>
    <scope>IDENTIFICATION BY MASS SPECTROMETRY [LARGE SCALE ANALYSIS]</scope>
    <source>
        <strain>N315</strain>
    </source>
</reference>
<reference key="4">
    <citation type="journal article" date="2011" name="Antimicrob. Agents Chemother.">
        <title>Site-specific mutation of Staphylococcus aureus VraS reveals a crucial role for the VraR-VraS sensor in the emergence of glycopeptide resistance.</title>
        <authorList>
            <person name="Galbusera E."/>
            <person name="Renzoni A."/>
            <person name="Andrey D.O."/>
            <person name="Monod A."/>
            <person name="Barras C."/>
            <person name="Tortora P."/>
            <person name="Polissi A."/>
            <person name="Kelley W.L."/>
        </authorList>
    </citation>
    <scope>FUNCTION</scope>
    <scope>CATALYTIC ACTIVITY</scope>
    <scope>PHOSPHORYLATION AT HIS-156</scope>
    <scope>MUTAGENESIS OF HIS-156</scope>
</reference>
<reference key="5">
    <citation type="journal article" date="2015" name="J. Antibiot.">
        <title>A novel mutation in the vraS gene of Staphylococcus aureus contributes to reduce susceptibility against daptomycin.</title>
        <authorList>
            <person name="Su J."/>
            <person name="Iehara M."/>
            <person name="Yasukawa J."/>
            <person name="Matsumoto Y."/>
            <person name="Hamamoto H."/>
            <person name="Sekimizu K."/>
        </authorList>
    </citation>
    <scope>FUNCTION</scope>
    <scope>MUTAGENESIS OF GLU-276</scope>
</reference>
<proteinExistence type="evidence at protein level"/>
<sequence length="347" mass="40045">MNHYIRTIGSMLILVYSMLAAFLFIDKVFVNIIYFQGMFYTQIFGIPVFLFLNLIIILLCIIVGSVLAYKINQQNDWIKTQIERSMEGETVGINDQNIEIYSETLDLYHTLVPLNQELHKLRLKTQNLTNENYNINDVKVKKIIEDERQRLARELHDSVSQQLFAASMMLSAIKETKLEPPLDQQIPILEKMVQDSQLEMRALLLHLRPLGLKDKSLGEGIKDLVIDLQKKVPMKVVHEIQDFKVPKGIEDHLFRITQEAISNTLRHSNGTKVTVELFNKDDYLLLRIQDNGKGFNVDEKLEQSYGLKNMRERALEIGATFHIVSLPDSGTRIEVKAPLNKEDSYDD</sequence>
<evidence type="ECO:0000250" key="1">
    <source>
        <dbReference type="UniProtKB" id="Q9HWA7"/>
    </source>
</evidence>
<evidence type="ECO:0000255" key="2"/>
<evidence type="ECO:0000269" key="3">
    <source>
    </source>
</evidence>
<evidence type="ECO:0000269" key="4">
    <source>
    </source>
</evidence>
<evidence type="ECO:0000303" key="5">
    <source>
    </source>
</evidence>
<evidence type="ECO:0000305" key="6"/>
<accession>Q99SZ7</accession>
<protein>
    <recommendedName>
        <fullName evidence="5">Sensor protein VraS</fullName>
        <ecNumber evidence="3">2.7.13.3</ecNumber>
    </recommendedName>
</protein>
<keyword id="KW-0046">Antibiotic resistance</keyword>
<keyword id="KW-0067">ATP-binding</keyword>
<keyword id="KW-1003">Cell membrane</keyword>
<keyword id="KW-0418">Kinase</keyword>
<keyword id="KW-0472">Membrane</keyword>
<keyword id="KW-0547">Nucleotide-binding</keyword>
<keyword id="KW-0597">Phosphoprotein</keyword>
<keyword id="KW-0808">Transferase</keyword>
<keyword id="KW-0812">Transmembrane</keyword>
<keyword id="KW-1133">Transmembrane helix</keyword>
<keyword id="KW-0902">Two-component regulatory system</keyword>
<gene>
    <name evidence="5" type="primary">vraS</name>
    <name type="ordered locus">SA1701</name>
</gene>
<feature type="chain" id="PRO_0000074901" description="Sensor protein VraS">
    <location>
        <begin position="1"/>
        <end position="347"/>
    </location>
</feature>
<feature type="transmembrane region" description="Helical" evidence="2">
    <location>
        <begin position="13"/>
        <end position="33"/>
    </location>
</feature>
<feature type="transmembrane region" description="Helical" evidence="2">
    <location>
        <begin position="43"/>
        <end position="63"/>
    </location>
</feature>
<feature type="domain" description="Histidine kinase">
    <location>
        <begin position="150"/>
        <end position="341"/>
    </location>
</feature>
<feature type="modified residue" description="Phosphohistidine; by autocatalysis" evidence="3">
    <location>
        <position position="156"/>
    </location>
</feature>
<feature type="mutagenesis site" description="Complete loss of phosphorylation." evidence="3">
    <original>H</original>
    <variation>A</variation>
    <location>
        <position position="156"/>
    </location>
</feature>
<feature type="mutagenesis site" description="About 4-fold reduced daptomycin sensitivity." evidence="4">
    <original>E</original>
    <variation>K</variation>
    <location>
        <position position="276"/>
    </location>
</feature>
<organism>
    <name type="scientific">Staphylococcus aureus (strain N315)</name>
    <dbReference type="NCBI Taxonomy" id="158879"/>
    <lineage>
        <taxon>Bacteria</taxon>
        <taxon>Bacillati</taxon>
        <taxon>Bacillota</taxon>
        <taxon>Bacilli</taxon>
        <taxon>Bacillales</taxon>
        <taxon>Staphylococcaceae</taxon>
        <taxon>Staphylococcus</taxon>
    </lineage>
</organism>
<dbReference type="EC" id="2.7.13.3" evidence="3"/>
<dbReference type="EMBL" id="BA000018">
    <property type="protein sequence ID" value="BAB42971.1"/>
    <property type="molecule type" value="Genomic_DNA"/>
</dbReference>
<dbReference type="PIR" id="D89976">
    <property type="entry name" value="D89976"/>
</dbReference>
<dbReference type="RefSeq" id="WP_001017131.1">
    <property type="nucleotide sequence ID" value="NC_002745.2"/>
</dbReference>
<dbReference type="SMR" id="Q99SZ7"/>
<dbReference type="iPTMnet" id="Q99SZ7"/>
<dbReference type="EnsemblBacteria" id="BAB42971">
    <property type="protein sequence ID" value="BAB42971"/>
    <property type="gene ID" value="BAB42971"/>
</dbReference>
<dbReference type="KEGG" id="sau:SA1701"/>
<dbReference type="HOGENOM" id="CLU_000445_20_12_9"/>
<dbReference type="PHI-base" id="PHI:8947"/>
<dbReference type="GO" id="GO:0005886">
    <property type="term" value="C:plasma membrane"/>
    <property type="evidence" value="ECO:0007669"/>
    <property type="project" value="UniProtKB-SubCell"/>
</dbReference>
<dbReference type="GO" id="GO:0005524">
    <property type="term" value="F:ATP binding"/>
    <property type="evidence" value="ECO:0007669"/>
    <property type="project" value="UniProtKB-KW"/>
</dbReference>
<dbReference type="GO" id="GO:0000155">
    <property type="term" value="F:phosphorelay sensor kinase activity"/>
    <property type="evidence" value="ECO:0007669"/>
    <property type="project" value="InterPro"/>
</dbReference>
<dbReference type="GO" id="GO:0046983">
    <property type="term" value="F:protein dimerization activity"/>
    <property type="evidence" value="ECO:0007669"/>
    <property type="project" value="InterPro"/>
</dbReference>
<dbReference type="GO" id="GO:0046677">
    <property type="term" value="P:response to antibiotic"/>
    <property type="evidence" value="ECO:0007669"/>
    <property type="project" value="UniProtKB-KW"/>
</dbReference>
<dbReference type="CDD" id="cd16917">
    <property type="entry name" value="HATPase_UhpB-NarQ-NarX-like"/>
    <property type="match status" value="1"/>
</dbReference>
<dbReference type="Gene3D" id="1.20.5.1930">
    <property type="match status" value="1"/>
</dbReference>
<dbReference type="Gene3D" id="3.30.565.10">
    <property type="entry name" value="Histidine kinase-like ATPase, C-terminal domain"/>
    <property type="match status" value="1"/>
</dbReference>
<dbReference type="InterPro" id="IPR036890">
    <property type="entry name" value="HATPase_C_sf"/>
</dbReference>
<dbReference type="InterPro" id="IPR017202">
    <property type="entry name" value="LiaS/VraS"/>
</dbReference>
<dbReference type="InterPro" id="IPR050482">
    <property type="entry name" value="Sensor_HK_TwoCompSys"/>
</dbReference>
<dbReference type="InterPro" id="IPR011712">
    <property type="entry name" value="Sig_transdc_His_kin_sub3_dim/P"/>
</dbReference>
<dbReference type="PANTHER" id="PTHR24421">
    <property type="entry name" value="NITRATE/NITRITE SENSOR PROTEIN NARX-RELATED"/>
    <property type="match status" value="1"/>
</dbReference>
<dbReference type="PANTHER" id="PTHR24421:SF37">
    <property type="entry name" value="SENSOR HISTIDINE KINASE NARS"/>
    <property type="match status" value="1"/>
</dbReference>
<dbReference type="Pfam" id="PF02518">
    <property type="entry name" value="HATPase_c"/>
    <property type="match status" value="1"/>
</dbReference>
<dbReference type="Pfam" id="PF07730">
    <property type="entry name" value="HisKA_3"/>
    <property type="match status" value="1"/>
</dbReference>
<dbReference type="PIRSF" id="PIRSF037431">
    <property type="entry name" value="STHK_LiaS"/>
    <property type="match status" value="1"/>
</dbReference>
<dbReference type="SMART" id="SM00387">
    <property type="entry name" value="HATPase_c"/>
    <property type="match status" value="1"/>
</dbReference>
<dbReference type="SUPFAM" id="SSF55874">
    <property type="entry name" value="ATPase domain of HSP90 chaperone/DNA topoisomerase II/histidine kinase"/>
    <property type="match status" value="1"/>
</dbReference>
<comment type="function">
    <text evidence="1">Member of the two-component regulatory system PprA/PprB involved in biofilm formation by controlling the expression of many related genes including type IVb pili major subunit flp pilin, adhesin bapA or cupE fimbriae. Also modulates quorum-sensing signal production acting on both negative and positive modulators. Functions as a heme sensor histidine kinase which is autophosphorylated at a histidine residue and transfers its phosphate group to PprB.</text>
</comment>
<comment type="catalytic activity">
    <reaction evidence="3">
        <text>ATP + protein L-histidine = ADP + protein N-phospho-L-histidine.</text>
        <dbReference type="EC" id="2.7.13.3"/>
    </reaction>
</comment>
<comment type="subcellular location">
    <subcellularLocation>
        <location evidence="6">Cell membrane</location>
        <topology evidence="6">Multi-pass membrane protein</topology>
    </subcellularLocation>
</comment>
<comment type="induction">
    <text>Induced by antibiotics (teicoplanin, ceftizoxime, imipenem, bacitracin, D-cycloserine and vancomycin).</text>
</comment>
<comment type="PTM">
    <text evidence="3">Autophosphorylated on His-156.</text>
</comment>
<name>VRAS_STAAN</name>